<organism>
    <name type="scientific">Homo sapiens</name>
    <name type="common">Human</name>
    <dbReference type="NCBI Taxonomy" id="9606"/>
    <lineage>
        <taxon>Eukaryota</taxon>
        <taxon>Metazoa</taxon>
        <taxon>Chordata</taxon>
        <taxon>Craniata</taxon>
        <taxon>Vertebrata</taxon>
        <taxon>Euteleostomi</taxon>
        <taxon>Mammalia</taxon>
        <taxon>Eutheria</taxon>
        <taxon>Euarchontoglires</taxon>
        <taxon>Primates</taxon>
        <taxon>Haplorrhini</taxon>
        <taxon>Catarrhini</taxon>
        <taxon>Hominidae</taxon>
        <taxon>Homo</taxon>
    </lineage>
</organism>
<evidence type="ECO:0000250" key="1">
    <source>
        <dbReference type="UniProtKB" id="P26599"/>
    </source>
</evidence>
<evidence type="ECO:0000255" key="2">
    <source>
        <dbReference type="PROSITE-ProRule" id="PRU00176"/>
    </source>
</evidence>
<evidence type="ECO:0000256" key="3">
    <source>
        <dbReference type="SAM" id="MobiDB-lite"/>
    </source>
</evidence>
<evidence type="ECO:0000269" key="4">
    <source>
    </source>
</evidence>
<evidence type="ECO:0000269" key="5">
    <source>
    </source>
</evidence>
<evidence type="ECO:0000269" key="6">
    <source>
    </source>
</evidence>
<evidence type="ECO:0000269" key="7">
    <source>
    </source>
</evidence>
<evidence type="ECO:0000303" key="8">
    <source>
    </source>
</evidence>
<evidence type="ECO:0000303" key="9">
    <source>
    </source>
</evidence>
<evidence type="ECO:0000303" key="10">
    <source>
    </source>
</evidence>
<evidence type="ECO:0000305" key="11"/>
<evidence type="ECO:0007744" key="12">
    <source>
    </source>
</evidence>
<evidence type="ECO:0007744" key="13">
    <source>
    </source>
</evidence>
<evidence type="ECO:0007744" key="14">
    <source>
    </source>
</evidence>
<keyword id="KW-0007">Acetylation</keyword>
<keyword id="KW-0025">Alternative splicing</keyword>
<keyword id="KW-0221">Differentiation</keyword>
<keyword id="KW-0265">Erythrocyte maturation</keyword>
<keyword id="KW-1017">Isopeptide bond</keyword>
<keyword id="KW-0507">mRNA processing</keyword>
<keyword id="KW-0508">mRNA splicing</keyword>
<keyword id="KW-0597">Phosphoprotein</keyword>
<keyword id="KW-1267">Proteomics identification</keyword>
<keyword id="KW-1185">Reference proteome</keyword>
<keyword id="KW-0677">Repeat</keyword>
<keyword id="KW-0678">Repressor</keyword>
<keyword id="KW-0694">RNA-binding</keyword>
<keyword id="KW-0832">Ubl conjugation</keyword>
<name>PTBP3_HUMAN</name>
<accession>O95758</accession>
<accession>B1ALY2</accession>
<accession>B1ALY3</accession>
<accession>B1ALY5</accession>
<accession>B1ALY6</accession>
<accession>B3KME7</accession>
<accession>Q68DB9</accession>
<accession>Q86YB3</accession>
<accession>Q86YH9</accession>
<proteinExistence type="evidence at protein level"/>
<comment type="function">
    <text evidence="4 5 6 7">RNA-binding protein that mediates pre-mRNA alternative splicing regulation. Plays a role in the regulation of cell proliferation, differentiation and migration. Positive regulator of EPO-dependent erythropoiesis. Participates in cell differentiation regulation by repressing tissue-specific exons. Promotes FAS exon 6 skipping. Binds RNA, preferentially to both poly(G) and poly(U).</text>
</comment>
<comment type="subunit">
    <text evidence="6">Interacts with THBS4 (via the acidic amphipathic C-terminus).</text>
</comment>
<comment type="alternative products">
    <event type="alternative splicing"/>
    <isoform>
        <id>O95758-3</id>
        <name>3</name>
        <sequence type="displayed"/>
    </isoform>
    <isoform>
        <id>O95758-1</id>
        <name>1</name>
        <sequence type="described" ref="VSP_035985"/>
    </isoform>
    <isoform>
        <id>O95758-2</id>
        <name>2</name>
        <sequence type="described" ref="VSP_035985 VSP_010867 VSP_010868"/>
    </isoform>
    <isoform>
        <id>O95758-4</id>
        <name>4</name>
        <sequence type="described" ref="VSP_035986"/>
    </isoform>
    <isoform>
        <id>O95758-5</id>
        <name>5</name>
        <sequence type="described" ref="VSP_010867"/>
    </isoform>
    <isoform>
        <id>O95758-6</id>
        <name>6</name>
        <sequence type="described" ref="VSP_035985 VSP_010867"/>
    </isoform>
    <isoform>
        <id>O95758-7</id>
        <name>7</name>
        <sequence type="described" ref="VSP_045608"/>
    </isoform>
</comment>
<comment type="tissue specificity">
    <text evidence="4">Expressed in several hematopoietic cell lines examined.</text>
</comment>
<comment type="sequence caution" evidence="11">
    <conflict type="erroneous initiation">
        <sequence resource="EMBL-CDS" id="AAH39896"/>
    </conflict>
    <text>Extended N-terminus.</text>
</comment>
<comment type="sequence caution" evidence="11">
    <conflict type="erroneous initiation">
        <sequence resource="EMBL-CDS" id="BAA75466"/>
    </conflict>
    <text>Truncated N-terminus.</text>
</comment>
<comment type="sequence caution" evidence="11">
    <conflict type="frameshift">
        <sequence resource="EMBL" id="BI463123"/>
    </conflict>
</comment>
<sequence>MDGVVTDLITVGLKRGSDELLSSGIINGPFTMNSSTPSTANGNDSKKFKRDRPPCSPSRVLHLRKIPCDVTEAEIISLGLPFGKVTNLLMLKGKSQAFLEMASEEAAVTMVNYYTPITPHLRSQPVYIQYSNHRELKTDNLPNQARAQAALQAVSAVQSGSLALSGGPSNEGTVLPGQSPVLRIIIENLFYPVTLEVLHQIFSKFGTVLKIITFTKNNQFQALLQYADPVNAHYAKMALDGQNIYNACCTLRIDFSKLTSLNVKYNNDKSRDFTRLDLPTGDGQPSLEPPMAAAFGAPGIISSPYAGAAGFAPAIGFPQATGLSVPAVPGALGPLTITSSAVTGRMAIPGASGIPGNSVLLVTNLNPDLITPHGLFILFGVYGDVHRVKIMFNKKENALVQMADANQAQLAMNHLSGQRLYGKVLRATLSKHQAVQLPREGQEDQGLTKDFSNSPLHRFKKPGSKNFQNIFPPSATLHLSNIPPSVTVDDLKNLFIEAGCSVKAFKFFQKDRKMALIQLGSVEEAIQALIELHNHDLGENHHLRVSFSKSTI</sequence>
<dbReference type="EMBL" id="AK001685">
    <property type="protein sequence ID" value="BAG50959.1"/>
    <property type="molecule type" value="mRNA"/>
</dbReference>
<dbReference type="EMBL" id="AK302558">
    <property type="protein sequence ID" value="BAG63824.1"/>
    <property type="molecule type" value="mRNA"/>
</dbReference>
<dbReference type="EMBL" id="CR749471">
    <property type="protein sequence ID" value="CAH18301.1"/>
    <property type="molecule type" value="mRNA"/>
</dbReference>
<dbReference type="EMBL" id="AL158824">
    <property type="status" value="NOT_ANNOTATED_CDS"/>
    <property type="molecule type" value="Genomic_DNA"/>
</dbReference>
<dbReference type="EMBL" id="AL359073">
    <property type="status" value="NOT_ANNOTATED_CDS"/>
    <property type="molecule type" value="Genomic_DNA"/>
</dbReference>
<dbReference type="EMBL" id="CH471105">
    <property type="protein sequence ID" value="EAW59100.1"/>
    <property type="molecule type" value="Genomic_DNA"/>
</dbReference>
<dbReference type="EMBL" id="BC039896">
    <property type="protein sequence ID" value="AAH39896.1"/>
    <property type="status" value="ALT_INIT"/>
    <property type="molecule type" value="mRNA"/>
</dbReference>
<dbReference type="EMBL" id="BC044585">
    <property type="protein sequence ID" value="AAH44585.1"/>
    <property type="molecule type" value="mRNA"/>
</dbReference>
<dbReference type="EMBL" id="BI463123">
    <property type="status" value="NOT_ANNOTATED_CDS"/>
    <property type="molecule type" value="mRNA"/>
</dbReference>
<dbReference type="EMBL" id="AB023967">
    <property type="protein sequence ID" value="BAA75466.1"/>
    <property type="status" value="ALT_INIT"/>
    <property type="molecule type" value="mRNA"/>
</dbReference>
<dbReference type="CCDS" id="CCDS55332.1">
    <molecule id="O95758-6"/>
</dbReference>
<dbReference type="CCDS" id="CCDS55333.1">
    <molecule id="O95758-5"/>
</dbReference>
<dbReference type="CCDS" id="CCDS59140.1">
    <molecule id="O95758-7"/>
</dbReference>
<dbReference type="CCDS" id="CCDS59141.1">
    <molecule id="O95758-4"/>
</dbReference>
<dbReference type="CCDS" id="CCDS6784.1">
    <molecule id="O95758-3"/>
</dbReference>
<dbReference type="RefSeq" id="NP_001157260.1">
    <molecule id="O95758-6"/>
    <property type="nucleotide sequence ID" value="NM_001163788.4"/>
</dbReference>
<dbReference type="RefSeq" id="NP_001157262.1">
    <molecule id="O95758-5"/>
    <property type="nucleotide sequence ID" value="NM_001163790.2"/>
</dbReference>
<dbReference type="RefSeq" id="NP_001231825.1">
    <molecule id="O95758-7"/>
    <property type="nucleotide sequence ID" value="NM_001244896.2"/>
</dbReference>
<dbReference type="RefSeq" id="NP_001231826.1">
    <molecule id="O95758-2"/>
    <property type="nucleotide sequence ID" value="NM_001244897.2"/>
</dbReference>
<dbReference type="RefSeq" id="NP_001231827.1">
    <molecule id="O95758-4"/>
    <property type="nucleotide sequence ID" value="NM_001244898.1"/>
</dbReference>
<dbReference type="RefSeq" id="NP_001362847.1">
    <molecule id="O95758-1"/>
    <property type="nucleotide sequence ID" value="NM_001375918.1"/>
</dbReference>
<dbReference type="RefSeq" id="NP_005147.3">
    <molecule id="O95758-3"/>
    <property type="nucleotide sequence ID" value="NM_005156.6"/>
</dbReference>
<dbReference type="RefSeq" id="XP_006717409.1">
    <property type="nucleotide sequence ID" value="XM_006717346.1"/>
</dbReference>
<dbReference type="RefSeq" id="XP_047280227.1">
    <molecule id="O95758-6"/>
    <property type="nucleotide sequence ID" value="XM_047424271.1"/>
</dbReference>
<dbReference type="RefSeq" id="XP_047280228.1">
    <molecule id="O95758-6"/>
    <property type="nucleotide sequence ID" value="XM_047424272.1"/>
</dbReference>
<dbReference type="RefSeq" id="XP_047280229.1">
    <molecule id="O95758-7"/>
    <property type="nucleotide sequence ID" value="XM_047424273.1"/>
</dbReference>
<dbReference type="SMR" id="O95758"/>
<dbReference type="BioGRID" id="115312">
    <property type="interactions" value="209"/>
</dbReference>
<dbReference type="FunCoup" id="O95758">
    <property type="interactions" value="2954"/>
</dbReference>
<dbReference type="IntAct" id="O95758">
    <property type="interactions" value="344"/>
</dbReference>
<dbReference type="MINT" id="O95758"/>
<dbReference type="STRING" id="9606.ENSP00000414921"/>
<dbReference type="GlyGen" id="O95758">
    <property type="glycosylation" value="1 site, 1 O-linked glycan (1 site)"/>
</dbReference>
<dbReference type="iPTMnet" id="O95758"/>
<dbReference type="PhosphoSitePlus" id="O95758"/>
<dbReference type="SwissPalm" id="O95758"/>
<dbReference type="BioMuta" id="PTBP3"/>
<dbReference type="jPOST" id="O95758"/>
<dbReference type="MassIVE" id="O95758"/>
<dbReference type="PaxDb" id="9606-ENSP00000414921"/>
<dbReference type="PeptideAtlas" id="O95758"/>
<dbReference type="ProteomicsDB" id="3178"/>
<dbReference type="ProteomicsDB" id="51028">
    <molecule id="O95758-3"/>
</dbReference>
<dbReference type="ProteomicsDB" id="51029">
    <molecule id="O95758-1"/>
</dbReference>
<dbReference type="ProteomicsDB" id="51030">
    <molecule id="O95758-2"/>
</dbReference>
<dbReference type="ProteomicsDB" id="51031">
    <molecule id="O95758-4"/>
</dbReference>
<dbReference type="ProteomicsDB" id="51032">
    <molecule id="O95758-5"/>
</dbReference>
<dbReference type="ProteomicsDB" id="51033">
    <molecule id="O95758-6"/>
</dbReference>
<dbReference type="Pumba" id="O95758"/>
<dbReference type="Antibodypedia" id="29656">
    <property type="antibodies" value="168 antibodies from 23 providers"/>
</dbReference>
<dbReference type="DNASU" id="9991"/>
<dbReference type="Ensembl" id="ENST00000334318.10">
    <molecule id="O95758-5"/>
    <property type="protein sequence ID" value="ENSP00000334499.6"/>
    <property type="gene ID" value="ENSG00000119314.16"/>
</dbReference>
<dbReference type="Ensembl" id="ENST00000343327.6">
    <molecule id="O95758-7"/>
    <property type="protein sequence ID" value="ENSP00000340705.2"/>
    <property type="gene ID" value="ENSG00000119314.16"/>
</dbReference>
<dbReference type="Ensembl" id="ENST00000374255.6">
    <molecule id="O95758-3"/>
    <property type="protein sequence ID" value="ENSP00000363373.2"/>
    <property type="gene ID" value="ENSG00000119314.16"/>
</dbReference>
<dbReference type="Ensembl" id="ENST00000374257.6">
    <molecule id="O95758-6"/>
    <property type="protein sequence ID" value="ENSP00000363375.1"/>
    <property type="gene ID" value="ENSG00000119314.16"/>
</dbReference>
<dbReference type="Ensembl" id="ENST00000458258.5">
    <molecule id="O95758-4"/>
    <property type="protein sequence ID" value="ENSP00000414921.1"/>
    <property type="gene ID" value="ENSG00000119314.16"/>
</dbReference>
<dbReference type="GeneID" id="9991"/>
<dbReference type="KEGG" id="hsa:9991"/>
<dbReference type="MANE-Select" id="ENST00000374257.6">
    <molecule id="O95758-6"/>
    <property type="protein sequence ID" value="ENSP00000363375.1"/>
    <property type="RefSeq nucleotide sequence ID" value="NM_001163788.4"/>
    <property type="RefSeq protein sequence ID" value="NP_001157260.1"/>
</dbReference>
<dbReference type="UCSC" id="uc004bfv.4">
    <molecule id="O95758-3"/>
    <property type="organism name" value="human"/>
</dbReference>
<dbReference type="AGR" id="HGNC:10253"/>
<dbReference type="CTD" id="9991"/>
<dbReference type="DisGeNET" id="9991"/>
<dbReference type="GeneCards" id="PTBP3"/>
<dbReference type="HGNC" id="HGNC:10253">
    <property type="gene designation" value="PTBP3"/>
</dbReference>
<dbReference type="HPA" id="ENSG00000119314">
    <property type="expression patterns" value="Low tissue specificity"/>
</dbReference>
<dbReference type="MIM" id="607527">
    <property type="type" value="gene"/>
</dbReference>
<dbReference type="neXtProt" id="NX_O95758"/>
<dbReference type="OpenTargets" id="ENSG00000119314"/>
<dbReference type="PharmGKB" id="PA34625"/>
<dbReference type="VEuPathDB" id="HostDB:ENSG00000119314"/>
<dbReference type="eggNOG" id="KOG1190">
    <property type="taxonomic scope" value="Eukaryota"/>
</dbReference>
<dbReference type="GeneTree" id="ENSGT01050000244924"/>
<dbReference type="HOGENOM" id="CLU_015171_7_1_1"/>
<dbReference type="InParanoid" id="O95758"/>
<dbReference type="OMA" id="VIFQKSG"/>
<dbReference type="OrthoDB" id="296632at2759"/>
<dbReference type="PAN-GO" id="O95758">
    <property type="GO annotations" value="3 GO annotations based on evolutionary models"/>
</dbReference>
<dbReference type="PhylomeDB" id="O95758"/>
<dbReference type="TreeFam" id="TF319824"/>
<dbReference type="PathwayCommons" id="O95758"/>
<dbReference type="SignaLink" id="O95758"/>
<dbReference type="BioGRID-ORCS" id="9991">
    <property type="hits" value="13 hits in 1161 CRISPR screens"/>
</dbReference>
<dbReference type="CD-CODE" id="232F8A39">
    <property type="entry name" value="P-body"/>
</dbReference>
<dbReference type="CD-CODE" id="DEE660B4">
    <property type="entry name" value="Stress granule"/>
</dbReference>
<dbReference type="ChiTaRS" id="PTBP3">
    <property type="organism name" value="human"/>
</dbReference>
<dbReference type="GenomeRNAi" id="9991"/>
<dbReference type="Pharos" id="O95758">
    <property type="development level" value="Tbio"/>
</dbReference>
<dbReference type="PRO" id="PR:O95758"/>
<dbReference type="Proteomes" id="UP000005640">
    <property type="component" value="Chromosome 9"/>
</dbReference>
<dbReference type="RNAct" id="O95758">
    <property type="molecule type" value="protein"/>
</dbReference>
<dbReference type="Bgee" id="ENSG00000119314">
    <property type="expression patterns" value="Expressed in epithelium of nasopharynx and 204 other cell types or tissues"/>
</dbReference>
<dbReference type="ExpressionAtlas" id="O95758">
    <property type="expression patterns" value="baseline and differential"/>
</dbReference>
<dbReference type="GO" id="GO:0005634">
    <property type="term" value="C:nucleus"/>
    <property type="evidence" value="ECO:0000318"/>
    <property type="project" value="GO_Central"/>
</dbReference>
<dbReference type="GO" id="GO:0003729">
    <property type="term" value="F:mRNA binding"/>
    <property type="evidence" value="ECO:0000318"/>
    <property type="project" value="GO_Central"/>
</dbReference>
<dbReference type="GO" id="GO:0003723">
    <property type="term" value="F:RNA binding"/>
    <property type="evidence" value="ECO:0007005"/>
    <property type="project" value="UniProtKB"/>
</dbReference>
<dbReference type="GO" id="GO:0009653">
    <property type="term" value="P:anatomical structure morphogenesis"/>
    <property type="evidence" value="ECO:0000304"/>
    <property type="project" value="ProtInc"/>
</dbReference>
<dbReference type="GO" id="GO:0043249">
    <property type="term" value="P:erythrocyte maturation"/>
    <property type="evidence" value="ECO:0007669"/>
    <property type="project" value="UniProtKB-KW"/>
</dbReference>
<dbReference type="GO" id="GO:0006397">
    <property type="term" value="P:mRNA processing"/>
    <property type="evidence" value="ECO:0007669"/>
    <property type="project" value="UniProtKB-KW"/>
</dbReference>
<dbReference type="GO" id="GO:0033119">
    <property type="term" value="P:negative regulation of RNA splicing"/>
    <property type="evidence" value="ECO:0000314"/>
    <property type="project" value="UniProtKB"/>
</dbReference>
<dbReference type="GO" id="GO:0045595">
    <property type="term" value="P:regulation of cell differentiation"/>
    <property type="evidence" value="ECO:0007669"/>
    <property type="project" value="InterPro"/>
</dbReference>
<dbReference type="GO" id="GO:0043484">
    <property type="term" value="P:regulation of RNA splicing"/>
    <property type="evidence" value="ECO:0000318"/>
    <property type="project" value="GO_Central"/>
</dbReference>
<dbReference type="GO" id="GO:0008380">
    <property type="term" value="P:RNA splicing"/>
    <property type="evidence" value="ECO:0007669"/>
    <property type="project" value="UniProtKB-KW"/>
</dbReference>
<dbReference type="CDD" id="cd12779">
    <property type="entry name" value="RRM1_ROD1"/>
    <property type="match status" value="1"/>
</dbReference>
<dbReference type="CDD" id="cd12784">
    <property type="entry name" value="RRM2_ROD1"/>
    <property type="match status" value="1"/>
</dbReference>
<dbReference type="CDD" id="cd12703">
    <property type="entry name" value="RRM4_ROD1"/>
    <property type="match status" value="1"/>
</dbReference>
<dbReference type="FunFam" id="3.30.70.330:FF:000223">
    <property type="entry name" value="Polypyrimidine tract binding protein 3"/>
    <property type="match status" value="1"/>
</dbReference>
<dbReference type="FunFam" id="3.30.70.330:FF:000036">
    <property type="entry name" value="polypyrimidine tract-binding protein 1 isoform X2"/>
    <property type="match status" value="1"/>
</dbReference>
<dbReference type="FunFam" id="3.30.70.330:FF:000018">
    <property type="entry name" value="Polypyrimidine tract-binding protein 2 isoform 1"/>
    <property type="match status" value="1"/>
</dbReference>
<dbReference type="FunFam" id="3.30.70.330:FF:000032">
    <property type="entry name" value="Polypyrimidine tract-binding protein 2 isoform 1"/>
    <property type="match status" value="1"/>
</dbReference>
<dbReference type="Gene3D" id="3.30.70.330">
    <property type="match status" value="4"/>
</dbReference>
<dbReference type="InterPro" id="IPR006536">
    <property type="entry name" value="HnRNP-L/PTB"/>
</dbReference>
<dbReference type="InterPro" id="IPR012677">
    <property type="entry name" value="Nucleotide-bd_a/b_plait_sf"/>
</dbReference>
<dbReference type="InterPro" id="IPR021790">
    <property type="entry name" value="PTBP1-like_RRM2"/>
</dbReference>
<dbReference type="InterPro" id="IPR033110">
    <property type="entry name" value="PTBP3_RRM4"/>
</dbReference>
<dbReference type="InterPro" id="IPR035979">
    <property type="entry name" value="RBD_domain_sf"/>
</dbReference>
<dbReference type="InterPro" id="IPR034326">
    <property type="entry name" value="ROD1_RRM1"/>
</dbReference>
<dbReference type="InterPro" id="IPR000504">
    <property type="entry name" value="RRM_dom"/>
</dbReference>
<dbReference type="NCBIfam" id="TIGR01649">
    <property type="entry name" value="hnRNP-L_PTB"/>
    <property type="match status" value="1"/>
</dbReference>
<dbReference type="PANTHER" id="PTHR15592">
    <property type="entry name" value="MATRIN 3/NUCLEAR PROTEIN 220-RELATED"/>
    <property type="match status" value="1"/>
</dbReference>
<dbReference type="Pfam" id="PF13893">
    <property type="entry name" value="RRM_5"/>
    <property type="match status" value="2"/>
</dbReference>
<dbReference type="Pfam" id="PF11835">
    <property type="entry name" value="RRM_8"/>
    <property type="match status" value="1"/>
</dbReference>
<dbReference type="SMART" id="SM00360">
    <property type="entry name" value="RRM"/>
    <property type="match status" value="4"/>
</dbReference>
<dbReference type="SUPFAM" id="SSF54928">
    <property type="entry name" value="RNA-binding domain, RBD"/>
    <property type="match status" value="3"/>
</dbReference>
<dbReference type="PROSITE" id="PS50102">
    <property type="entry name" value="RRM"/>
    <property type="match status" value="4"/>
</dbReference>
<feature type="chain" id="PRO_0000081873" description="Polypyrimidine tract-binding protein 3">
    <location>
        <begin position="1"/>
        <end position="552"/>
    </location>
</feature>
<feature type="domain" description="RRM 1" evidence="2">
    <location>
        <begin position="59"/>
        <end position="143"/>
    </location>
</feature>
<feature type="domain" description="RRM 2" evidence="2">
    <location>
        <begin position="182"/>
        <end position="258"/>
    </location>
</feature>
<feature type="domain" description="RRM 3" evidence="2">
    <location>
        <begin position="358"/>
        <end position="432"/>
    </location>
</feature>
<feature type="domain" description="RRM 4" evidence="2">
    <location>
        <begin position="475"/>
        <end position="550"/>
    </location>
</feature>
<feature type="region of interest" description="Disordered" evidence="3">
    <location>
        <begin position="32"/>
        <end position="55"/>
    </location>
</feature>
<feature type="region of interest" description="Disordered" evidence="3">
    <location>
        <begin position="435"/>
        <end position="455"/>
    </location>
</feature>
<feature type="compositionally biased region" description="Polar residues" evidence="3">
    <location>
        <begin position="32"/>
        <end position="43"/>
    </location>
</feature>
<feature type="modified residue" description="N-acetylmethionine" evidence="1">
    <location>
        <position position="1"/>
    </location>
</feature>
<feature type="modified residue" description="Phosphoserine" evidence="1">
    <location>
        <position position="17"/>
    </location>
</feature>
<feature type="modified residue" description="Phosphotyrosine" evidence="1">
    <location>
        <position position="127"/>
    </location>
</feature>
<feature type="modified residue" description="Phosphothreonine" evidence="1">
    <location>
        <position position="138"/>
    </location>
</feature>
<feature type="modified residue" description="N6-acetyllysine" evidence="13">
    <location>
        <position position="423"/>
    </location>
</feature>
<feature type="modified residue" description="Phosphoserine" evidence="14">
    <location>
        <position position="454"/>
    </location>
</feature>
<feature type="cross-link" description="Glycyl lysine isopeptide (Lys-Gly) (interchain with G-Cter in SUMO2)" evidence="1">
    <location>
        <position position="65"/>
    </location>
</feature>
<feature type="cross-link" description="Glycyl lysine isopeptide (Lys-Gly) (interchain with G-Cter in SUMO2)" evidence="1">
    <location>
        <position position="216"/>
    </location>
</feature>
<feature type="splice variant" id="VSP_045608" description="In isoform 7." evidence="8">
    <original>MDGVVTDLITVGLKRGSDELLSSGIINGPFTMNSSTPSTANGNDSKKFKRDRPPCSPSRVLHLRKIPCDVTEAEIISLGLPFGKVTNLLMLKGKSQ</original>
    <variation>M</variation>
    <location>
        <begin position="1"/>
        <end position="96"/>
    </location>
</feature>
<feature type="splice variant" id="VSP_035985" description="In isoform 1, isoform 2 and isoform 6." evidence="8 9">
    <location>
        <begin position="1"/>
        <end position="31"/>
    </location>
</feature>
<feature type="splice variant" id="VSP_035986" description="In isoform 4." evidence="9">
    <original>MDGVVTDLITVGLK</original>
    <variation>MDASPSPFSLPKKLNELSAR</variation>
    <location>
        <begin position="1"/>
        <end position="14"/>
    </location>
</feature>
<feature type="splice variant" id="VSP_010867" description="In isoform 2, isoform 5 and isoform 6." evidence="8 9 10">
    <original>T</original>
    <variation>TGVY</variation>
    <location>
        <position position="39"/>
    </location>
</feature>
<feature type="splice variant" id="VSP_010868" description="In isoform 2." evidence="9">
    <original>KDRKMALIQLGSVEEAIQALIELHNHDLGENHHLRVSFSKSTI</original>
    <variation>GLANSWAQVILLLPPPHSAGITGMSHHAWLSVLFSVSVPSVSSAYMFSILSCSFSSVPTRYFWTKN</variation>
    <location>
        <begin position="510"/>
        <end position="552"/>
    </location>
</feature>
<feature type="sequence conflict" description="In Ref. 1; BAG50959." evidence="11" ref="1">
    <original>T</original>
    <variation>I</variation>
    <location>
        <position position="259"/>
    </location>
</feature>
<feature type="modified residue" description="N-acetylmethionine" evidence="12">
    <location sequence="O95758-1">
        <position position="1"/>
    </location>
</feature>
<reference key="1">
    <citation type="journal article" date="2004" name="Nat. Genet.">
        <title>Complete sequencing and characterization of 21,243 full-length human cDNAs.</title>
        <authorList>
            <person name="Ota T."/>
            <person name="Suzuki Y."/>
            <person name="Nishikawa T."/>
            <person name="Otsuki T."/>
            <person name="Sugiyama T."/>
            <person name="Irie R."/>
            <person name="Wakamatsu A."/>
            <person name="Hayashi K."/>
            <person name="Sato H."/>
            <person name="Nagai K."/>
            <person name="Kimura K."/>
            <person name="Makita H."/>
            <person name="Sekine M."/>
            <person name="Obayashi M."/>
            <person name="Nishi T."/>
            <person name="Shibahara T."/>
            <person name="Tanaka T."/>
            <person name="Ishii S."/>
            <person name="Yamamoto J."/>
            <person name="Saito K."/>
            <person name="Kawai Y."/>
            <person name="Isono Y."/>
            <person name="Nakamura Y."/>
            <person name="Nagahari K."/>
            <person name="Murakami K."/>
            <person name="Yasuda T."/>
            <person name="Iwayanagi T."/>
            <person name="Wagatsuma M."/>
            <person name="Shiratori A."/>
            <person name="Sudo H."/>
            <person name="Hosoiri T."/>
            <person name="Kaku Y."/>
            <person name="Kodaira H."/>
            <person name="Kondo H."/>
            <person name="Sugawara M."/>
            <person name="Takahashi M."/>
            <person name="Kanda K."/>
            <person name="Yokoi T."/>
            <person name="Furuya T."/>
            <person name="Kikkawa E."/>
            <person name="Omura Y."/>
            <person name="Abe K."/>
            <person name="Kamihara K."/>
            <person name="Katsuta N."/>
            <person name="Sato K."/>
            <person name="Tanikawa M."/>
            <person name="Yamazaki M."/>
            <person name="Ninomiya K."/>
            <person name="Ishibashi T."/>
            <person name="Yamashita H."/>
            <person name="Murakawa K."/>
            <person name="Fujimori K."/>
            <person name="Tanai H."/>
            <person name="Kimata M."/>
            <person name="Watanabe M."/>
            <person name="Hiraoka S."/>
            <person name="Chiba Y."/>
            <person name="Ishida S."/>
            <person name="Ono Y."/>
            <person name="Takiguchi S."/>
            <person name="Watanabe S."/>
            <person name="Yosida M."/>
            <person name="Hotuta T."/>
            <person name="Kusano J."/>
            <person name="Kanehori K."/>
            <person name="Takahashi-Fujii A."/>
            <person name="Hara H."/>
            <person name="Tanase T.-O."/>
            <person name="Nomura Y."/>
            <person name="Togiya S."/>
            <person name="Komai F."/>
            <person name="Hara R."/>
            <person name="Takeuchi K."/>
            <person name="Arita M."/>
            <person name="Imose N."/>
            <person name="Musashino K."/>
            <person name="Yuuki H."/>
            <person name="Oshima A."/>
            <person name="Sasaki N."/>
            <person name="Aotsuka S."/>
            <person name="Yoshikawa Y."/>
            <person name="Matsunawa H."/>
            <person name="Ichihara T."/>
            <person name="Shiohata N."/>
            <person name="Sano S."/>
            <person name="Moriya S."/>
            <person name="Momiyama H."/>
            <person name="Satoh N."/>
            <person name="Takami S."/>
            <person name="Terashima Y."/>
            <person name="Suzuki O."/>
            <person name="Nakagawa S."/>
            <person name="Senoh A."/>
            <person name="Mizoguchi H."/>
            <person name="Goto Y."/>
            <person name="Shimizu F."/>
            <person name="Wakebe H."/>
            <person name="Hishigaki H."/>
            <person name="Watanabe T."/>
            <person name="Sugiyama A."/>
            <person name="Takemoto M."/>
            <person name="Kawakami B."/>
            <person name="Yamazaki M."/>
            <person name="Watanabe K."/>
            <person name="Kumagai A."/>
            <person name="Itakura S."/>
            <person name="Fukuzumi Y."/>
            <person name="Fujimori Y."/>
            <person name="Komiyama M."/>
            <person name="Tashiro H."/>
            <person name="Tanigami A."/>
            <person name="Fujiwara T."/>
            <person name="Ono T."/>
            <person name="Yamada K."/>
            <person name="Fujii Y."/>
            <person name="Ozaki K."/>
            <person name="Hirao M."/>
            <person name="Ohmori Y."/>
            <person name="Kawabata A."/>
            <person name="Hikiji T."/>
            <person name="Kobatake N."/>
            <person name="Inagaki H."/>
            <person name="Ikema Y."/>
            <person name="Okamoto S."/>
            <person name="Okitani R."/>
            <person name="Kawakami T."/>
            <person name="Noguchi S."/>
            <person name="Itoh T."/>
            <person name="Shigeta K."/>
            <person name="Senba T."/>
            <person name="Matsumura K."/>
            <person name="Nakajima Y."/>
            <person name="Mizuno T."/>
            <person name="Morinaga M."/>
            <person name="Sasaki M."/>
            <person name="Togashi T."/>
            <person name="Oyama M."/>
            <person name="Hata H."/>
            <person name="Watanabe M."/>
            <person name="Komatsu T."/>
            <person name="Mizushima-Sugano J."/>
            <person name="Satoh T."/>
            <person name="Shirai Y."/>
            <person name="Takahashi Y."/>
            <person name="Nakagawa K."/>
            <person name="Okumura K."/>
            <person name="Nagase T."/>
            <person name="Nomura N."/>
            <person name="Kikuchi H."/>
            <person name="Masuho Y."/>
            <person name="Yamashita R."/>
            <person name="Nakai K."/>
            <person name="Yada T."/>
            <person name="Nakamura Y."/>
            <person name="Ohara O."/>
            <person name="Isogai T."/>
            <person name="Sugano S."/>
        </authorList>
    </citation>
    <scope>NUCLEOTIDE SEQUENCE [LARGE SCALE MRNA] (ISOFORMS 6 AND 7)</scope>
    <source>
        <tissue>Testis</tissue>
    </source>
</reference>
<reference key="2">
    <citation type="journal article" date="2007" name="BMC Genomics">
        <title>The full-ORF clone resource of the German cDNA consortium.</title>
        <authorList>
            <person name="Bechtel S."/>
            <person name="Rosenfelder H."/>
            <person name="Duda A."/>
            <person name="Schmidt C.P."/>
            <person name="Ernst U."/>
            <person name="Wellenreuther R."/>
            <person name="Mehrle A."/>
            <person name="Schuster C."/>
            <person name="Bahr A."/>
            <person name="Bloecker H."/>
            <person name="Heubner D."/>
            <person name="Hoerlein A."/>
            <person name="Michel G."/>
            <person name="Wedler H."/>
            <person name="Koehrer K."/>
            <person name="Ottenwaelder B."/>
            <person name="Poustka A."/>
            <person name="Wiemann S."/>
            <person name="Schupp I."/>
        </authorList>
    </citation>
    <scope>NUCLEOTIDE SEQUENCE [LARGE SCALE MRNA] (ISOFORM 5)</scope>
    <source>
        <tissue>Fetal kidney</tissue>
    </source>
</reference>
<reference key="3">
    <citation type="journal article" date="2004" name="Nature">
        <title>DNA sequence and analysis of human chromosome 9.</title>
        <authorList>
            <person name="Humphray S.J."/>
            <person name="Oliver K."/>
            <person name="Hunt A.R."/>
            <person name="Plumb R.W."/>
            <person name="Loveland J.E."/>
            <person name="Howe K.L."/>
            <person name="Andrews T.D."/>
            <person name="Searle S."/>
            <person name="Hunt S.E."/>
            <person name="Scott C.E."/>
            <person name="Jones M.C."/>
            <person name="Ainscough R."/>
            <person name="Almeida J.P."/>
            <person name="Ambrose K.D."/>
            <person name="Ashwell R.I.S."/>
            <person name="Babbage A.K."/>
            <person name="Babbage S."/>
            <person name="Bagguley C.L."/>
            <person name="Bailey J."/>
            <person name="Banerjee R."/>
            <person name="Barker D.J."/>
            <person name="Barlow K.F."/>
            <person name="Bates K."/>
            <person name="Beasley H."/>
            <person name="Beasley O."/>
            <person name="Bird C.P."/>
            <person name="Bray-Allen S."/>
            <person name="Brown A.J."/>
            <person name="Brown J.Y."/>
            <person name="Burford D."/>
            <person name="Burrill W."/>
            <person name="Burton J."/>
            <person name="Carder C."/>
            <person name="Carter N.P."/>
            <person name="Chapman J.C."/>
            <person name="Chen Y."/>
            <person name="Clarke G."/>
            <person name="Clark S.Y."/>
            <person name="Clee C.M."/>
            <person name="Clegg S."/>
            <person name="Collier R.E."/>
            <person name="Corby N."/>
            <person name="Crosier M."/>
            <person name="Cummings A.T."/>
            <person name="Davies J."/>
            <person name="Dhami P."/>
            <person name="Dunn M."/>
            <person name="Dutta I."/>
            <person name="Dyer L.W."/>
            <person name="Earthrowl M.E."/>
            <person name="Faulkner L."/>
            <person name="Fleming C.J."/>
            <person name="Frankish A."/>
            <person name="Frankland J.A."/>
            <person name="French L."/>
            <person name="Fricker D.G."/>
            <person name="Garner P."/>
            <person name="Garnett J."/>
            <person name="Ghori J."/>
            <person name="Gilbert J.G.R."/>
            <person name="Glison C."/>
            <person name="Grafham D.V."/>
            <person name="Gribble S."/>
            <person name="Griffiths C."/>
            <person name="Griffiths-Jones S."/>
            <person name="Grocock R."/>
            <person name="Guy J."/>
            <person name="Hall R.E."/>
            <person name="Hammond S."/>
            <person name="Harley J.L."/>
            <person name="Harrison E.S.I."/>
            <person name="Hart E.A."/>
            <person name="Heath P.D."/>
            <person name="Henderson C.D."/>
            <person name="Hopkins B.L."/>
            <person name="Howard P.J."/>
            <person name="Howden P.J."/>
            <person name="Huckle E."/>
            <person name="Johnson C."/>
            <person name="Johnson D."/>
            <person name="Joy A.A."/>
            <person name="Kay M."/>
            <person name="Keenan S."/>
            <person name="Kershaw J.K."/>
            <person name="Kimberley A.M."/>
            <person name="King A."/>
            <person name="Knights A."/>
            <person name="Laird G.K."/>
            <person name="Langford C."/>
            <person name="Lawlor S."/>
            <person name="Leongamornlert D.A."/>
            <person name="Leversha M."/>
            <person name="Lloyd C."/>
            <person name="Lloyd D.M."/>
            <person name="Lovell J."/>
            <person name="Martin S."/>
            <person name="Mashreghi-Mohammadi M."/>
            <person name="Matthews L."/>
            <person name="McLaren S."/>
            <person name="McLay K.E."/>
            <person name="McMurray A."/>
            <person name="Milne S."/>
            <person name="Nickerson T."/>
            <person name="Nisbett J."/>
            <person name="Nordsiek G."/>
            <person name="Pearce A.V."/>
            <person name="Peck A.I."/>
            <person name="Porter K.M."/>
            <person name="Pandian R."/>
            <person name="Pelan S."/>
            <person name="Phillimore B."/>
            <person name="Povey S."/>
            <person name="Ramsey Y."/>
            <person name="Rand V."/>
            <person name="Scharfe M."/>
            <person name="Sehra H.K."/>
            <person name="Shownkeen R."/>
            <person name="Sims S.K."/>
            <person name="Skuce C.D."/>
            <person name="Smith M."/>
            <person name="Steward C.A."/>
            <person name="Swarbreck D."/>
            <person name="Sycamore N."/>
            <person name="Tester J."/>
            <person name="Thorpe A."/>
            <person name="Tracey A."/>
            <person name="Tromans A."/>
            <person name="Thomas D.W."/>
            <person name="Wall M."/>
            <person name="Wallis J.M."/>
            <person name="West A.P."/>
            <person name="Whitehead S.L."/>
            <person name="Willey D.L."/>
            <person name="Williams S.A."/>
            <person name="Wilming L."/>
            <person name="Wray P.W."/>
            <person name="Young L."/>
            <person name="Ashurst J.L."/>
            <person name="Coulson A."/>
            <person name="Blocker H."/>
            <person name="Durbin R.M."/>
            <person name="Sulston J.E."/>
            <person name="Hubbard T."/>
            <person name="Jackson M.J."/>
            <person name="Bentley D.R."/>
            <person name="Beck S."/>
            <person name="Rogers J."/>
            <person name="Dunham I."/>
        </authorList>
    </citation>
    <scope>NUCLEOTIDE SEQUENCE [LARGE SCALE GENOMIC DNA]</scope>
</reference>
<reference key="4">
    <citation type="submission" date="2005-07" db="EMBL/GenBank/DDBJ databases">
        <authorList>
            <person name="Mural R.J."/>
            <person name="Istrail S."/>
            <person name="Sutton G.G."/>
            <person name="Florea L."/>
            <person name="Halpern A.L."/>
            <person name="Mobarry C.M."/>
            <person name="Lippert R."/>
            <person name="Walenz B."/>
            <person name="Shatkay H."/>
            <person name="Dew I."/>
            <person name="Miller J.R."/>
            <person name="Flanigan M.J."/>
            <person name="Edwards N.J."/>
            <person name="Bolanos R."/>
            <person name="Fasulo D."/>
            <person name="Halldorsson B.V."/>
            <person name="Hannenhalli S."/>
            <person name="Turner R."/>
            <person name="Yooseph S."/>
            <person name="Lu F."/>
            <person name="Nusskern D.R."/>
            <person name="Shue B.C."/>
            <person name="Zheng X.H."/>
            <person name="Zhong F."/>
            <person name="Delcher A.L."/>
            <person name="Huson D.H."/>
            <person name="Kravitz S.A."/>
            <person name="Mouchard L."/>
            <person name="Reinert K."/>
            <person name="Remington K.A."/>
            <person name="Clark A.G."/>
            <person name="Waterman M.S."/>
            <person name="Eichler E.E."/>
            <person name="Adams M.D."/>
            <person name="Hunkapiller M.W."/>
            <person name="Myers E.W."/>
            <person name="Venter J.C."/>
        </authorList>
    </citation>
    <scope>NUCLEOTIDE SEQUENCE [LARGE SCALE GENOMIC DNA]</scope>
</reference>
<reference key="5">
    <citation type="journal article" date="2004" name="Genome Res.">
        <title>The status, quality, and expansion of the NIH full-length cDNA project: the Mammalian Gene Collection (MGC).</title>
        <authorList>
            <consortium name="The MGC Project Team"/>
        </authorList>
    </citation>
    <scope>NUCLEOTIDE SEQUENCE [LARGE SCALE MRNA] (ISOFORMS 2 AND 4)</scope>
    <scope>NUCLEOTIDE SEQUENCE [LARGE SCALE MRNA] OF 1-167 (ISOFORM 3)</scope>
    <source>
        <tissue>Testis</tissue>
    </source>
</reference>
<reference key="6">
    <citation type="journal article" date="1999" name="Mol. Cell. Biol.">
        <title>Isolation of a mammalian homologue of a fission yeast differentiation regulator.</title>
        <authorList>
            <person name="Yamamoto H."/>
            <person name="Tsukahara K."/>
            <person name="Kanaoka Y."/>
            <person name="Jinno S."/>
            <person name="Okayama H."/>
        </authorList>
    </citation>
    <scope>NUCLEOTIDE SEQUENCE [MRNA] OF 17-552 (ISOFORM 3)</scope>
    <scope>FUNCTION</scope>
    <scope>TISSUE SPECIFICITY</scope>
</reference>
<reference key="7">
    <citation type="journal article" date="2008" name="PLoS ONE">
        <title>Expression of human nPTB is limited by extreme suboptimal codon content.</title>
        <authorList>
            <person name="Robinson F."/>
            <person name="Jackson R.J."/>
            <person name="Smith C.W."/>
        </authorList>
    </citation>
    <scope>FUNCTION IN SPLICING REGULATION</scope>
</reference>
<reference key="8">
    <citation type="journal article" date="2009" name="Anal. Chem.">
        <title>Lys-N and trypsin cover complementary parts of the phosphoproteome in a refined SCX-based approach.</title>
        <authorList>
            <person name="Gauci S."/>
            <person name="Helbig A.O."/>
            <person name="Slijper M."/>
            <person name="Krijgsveld J."/>
            <person name="Heck A.J."/>
            <person name="Mohammed S."/>
        </authorList>
    </citation>
    <scope>ACETYLATION [LARGE SCALE ANALYSIS] AT MET-1 (ISOFORM 1)</scope>
    <scope>IDENTIFICATION BY MASS SPECTROMETRY [LARGE SCALE ANALYSIS]</scope>
</reference>
<reference key="9">
    <citation type="journal article" date="2009" name="J. Cell. Physiol.">
        <title>Regulator of differentiation 1 (ROD1) binds to the amphipathic C-terminal peptide of thrombospondin-4 and is involved in its mitogenic activity.</title>
        <authorList>
            <person name="Sadvakassova G."/>
            <person name="Dobocan M.C."/>
            <person name="Difalco M.R."/>
            <person name="Congote L.F."/>
        </authorList>
    </citation>
    <scope>FUNCTION IN ERYTHROPOIESIS</scope>
    <scope>INTERACTION WITH THBS4</scope>
    <scope>IDENTIFICATION BY MASS SPECTROMETRY</scope>
</reference>
<reference key="10">
    <citation type="journal article" date="2009" name="Science">
        <title>Lysine acetylation targets protein complexes and co-regulates major cellular functions.</title>
        <authorList>
            <person name="Choudhary C."/>
            <person name="Kumar C."/>
            <person name="Gnad F."/>
            <person name="Nielsen M.L."/>
            <person name="Rehman M."/>
            <person name="Walther T.C."/>
            <person name="Olsen J.V."/>
            <person name="Mann M."/>
        </authorList>
    </citation>
    <scope>ACETYLATION [LARGE SCALE ANALYSIS] AT LYS-423</scope>
    <scope>IDENTIFICATION BY MASS SPECTROMETRY [LARGE SCALE ANALYSIS]</scope>
</reference>
<reference key="11">
    <citation type="journal article" date="2010" name="FEBS Lett.">
        <title>MALAT-1 enhances cell motility of lung adenocarcinoma cells by influencing the expression of motility-related genes.</title>
        <authorList>
            <person name="Tano K."/>
            <person name="Mizuno R."/>
            <person name="Okada T."/>
            <person name="Rakwal R."/>
            <person name="Shibato J."/>
            <person name="Masuo Y."/>
            <person name="Ijiri K."/>
            <person name="Akimitsu N."/>
        </authorList>
    </citation>
    <scope>FUNCTION IN CELL MIGRATION</scope>
</reference>
<reference key="12">
    <citation type="journal article" date="2011" name="BMC Syst. Biol.">
        <title>Initial characterization of the human central proteome.</title>
        <authorList>
            <person name="Burkard T.R."/>
            <person name="Planyavsky M."/>
            <person name="Kaupe I."/>
            <person name="Breitwieser F.P."/>
            <person name="Buerckstuemmer T."/>
            <person name="Bennett K.L."/>
            <person name="Superti-Furga G."/>
            <person name="Colinge J."/>
        </authorList>
    </citation>
    <scope>IDENTIFICATION BY MASS SPECTROMETRY [LARGE SCALE ANALYSIS]</scope>
</reference>
<reference key="13">
    <citation type="journal article" date="2013" name="J. Proteome Res.">
        <title>Toward a comprehensive characterization of a human cancer cell phosphoproteome.</title>
        <authorList>
            <person name="Zhou H."/>
            <person name="Di Palma S."/>
            <person name="Preisinger C."/>
            <person name="Peng M."/>
            <person name="Polat A.N."/>
            <person name="Heck A.J."/>
            <person name="Mohammed S."/>
        </authorList>
    </citation>
    <scope>PHOSPHORYLATION [LARGE SCALE ANALYSIS] AT SER-454</scope>
    <scope>IDENTIFICATION BY MASS SPECTROMETRY [LARGE SCALE ANALYSIS]</scope>
    <source>
        <tissue>Cervix carcinoma</tissue>
        <tissue>Erythroleukemia</tissue>
    </source>
</reference>
<protein>
    <recommendedName>
        <fullName>Polypyrimidine tract-binding protein 3</fullName>
    </recommendedName>
    <alternativeName>
        <fullName>Regulator of differentiation 1</fullName>
        <shortName>Rod1</shortName>
    </alternativeName>
</protein>
<gene>
    <name type="primary">PTBP3</name>
    <name type="synonym">ROD1</name>
</gene>